<proteinExistence type="inferred from homology"/>
<dbReference type="EMBL" id="CP001283">
    <property type="protein sequence ID" value="ACK87988.1"/>
    <property type="molecule type" value="Genomic_DNA"/>
</dbReference>
<dbReference type="RefSeq" id="WP_000090365.1">
    <property type="nucleotide sequence ID" value="NC_011773.1"/>
</dbReference>
<dbReference type="KEGG" id="bcu:BCAH820_0119"/>
<dbReference type="HOGENOM" id="CLU_002794_4_1_9"/>
<dbReference type="Proteomes" id="UP000001363">
    <property type="component" value="Chromosome"/>
</dbReference>
<dbReference type="GO" id="GO:0005737">
    <property type="term" value="C:cytoplasm"/>
    <property type="evidence" value="ECO:0007669"/>
    <property type="project" value="UniProtKB-SubCell"/>
</dbReference>
<dbReference type="GO" id="GO:0005525">
    <property type="term" value="F:GTP binding"/>
    <property type="evidence" value="ECO:0007669"/>
    <property type="project" value="UniProtKB-UniRule"/>
</dbReference>
<dbReference type="GO" id="GO:0003924">
    <property type="term" value="F:GTPase activity"/>
    <property type="evidence" value="ECO:0007669"/>
    <property type="project" value="InterPro"/>
</dbReference>
<dbReference type="GO" id="GO:0003746">
    <property type="term" value="F:translation elongation factor activity"/>
    <property type="evidence" value="ECO:0007669"/>
    <property type="project" value="UniProtKB-UniRule"/>
</dbReference>
<dbReference type="GO" id="GO:0032790">
    <property type="term" value="P:ribosome disassembly"/>
    <property type="evidence" value="ECO:0007669"/>
    <property type="project" value="TreeGrafter"/>
</dbReference>
<dbReference type="CDD" id="cd01886">
    <property type="entry name" value="EF-G"/>
    <property type="match status" value="1"/>
</dbReference>
<dbReference type="CDD" id="cd16262">
    <property type="entry name" value="EFG_III"/>
    <property type="match status" value="1"/>
</dbReference>
<dbReference type="CDD" id="cd01434">
    <property type="entry name" value="EFG_mtEFG1_IV"/>
    <property type="match status" value="1"/>
</dbReference>
<dbReference type="CDD" id="cd03713">
    <property type="entry name" value="EFG_mtEFG_C"/>
    <property type="match status" value="1"/>
</dbReference>
<dbReference type="CDD" id="cd04088">
    <property type="entry name" value="EFG_mtEFG_II"/>
    <property type="match status" value="1"/>
</dbReference>
<dbReference type="FunFam" id="2.40.30.10:FF:000006">
    <property type="entry name" value="Elongation factor G"/>
    <property type="match status" value="1"/>
</dbReference>
<dbReference type="FunFam" id="3.30.230.10:FF:000003">
    <property type="entry name" value="Elongation factor G"/>
    <property type="match status" value="1"/>
</dbReference>
<dbReference type="FunFam" id="3.30.70.240:FF:000001">
    <property type="entry name" value="Elongation factor G"/>
    <property type="match status" value="1"/>
</dbReference>
<dbReference type="FunFam" id="3.30.70.870:FF:000001">
    <property type="entry name" value="Elongation factor G"/>
    <property type="match status" value="1"/>
</dbReference>
<dbReference type="FunFam" id="3.40.50.300:FF:000029">
    <property type="entry name" value="Elongation factor G"/>
    <property type="match status" value="1"/>
</dbReference>
<dbReference type="Gene3D" id="3.30.230.10">
    <property type="match status" value="1"/>
</dbReference>
<dbReference type="Gene3D" id="3.30.70.240">
    <property type="match status" value="1"/>
</dbReference>
<dbReference type="Gene3D" id="3.30.70.870">
    <property type="entry name" value="Elongation Factor G (Translational Gtpase), domain 3"/>
    <property type="match status" value="1"/>
</dbReference>
<dbReference type="Gene3D" id="3.40.50.300">
    <property type="entry name" value="P-loop containing nucleotide triphosphate hydrolases"/>
    <property type="match status" value="1"/>
</dbReference>
<dbReference type="Gene3D" id="2.40.30.10">
    <property type="entry name" value="Translation factors"/>
    <property type="match status" value="1"/>
</dbReference>
<dbReference type="HAMAP" id="MF_00054_B">
    <property type="entry name" value="EF_G_EF_2_B"/>
    <property type="match status" value="1"/>
</dbReference>
<dbReference type="InterPro" id="IPR041095">
    <property type="entry name" value="EFG_II"/>
</dbReference>
<dbReference type="InterPro" id="IPR009022">
    <property type="entry name" value="EFG_III"/>
</dbReference>
<dbReference type="InterPro" id="IPR035647">
    <property type="entry name" value="EFG_III/V"/>
</dbReference>
<dbReference type="InterPro" id="IPR047872">
    <property type="entry name" value="EFG_IV"/>
</dbReference>
<dbReference type="InterPro" id="IPR035649">
    <property type="entry name" value="EFG_V"/>
</dbReference>
<dbReference type="InterPro" id="IPR000640">
    <property type="entry name" value="EFG_V-like"/>
</dbReference>
<dbReference type="InterPro" id="IPR004161">
    <property type="entry name" value="EFTu-like_2"/>
</dbReference>
<dbReference type="InterPro" id="IPR031157">
    <property type="entry name" value="G_TR_CS"/>
</dbReference>
<dbReference type="InterPro" id="IPR027417">
    <property type="entry name" value="P-loop_NTPase"/>
</dbReference>
<dbReference type="InterPro" id="IPR020568">
    <property type="entry name" value="Ribosomal_Su5_D2-typ_SF"/>
</dbReference>
<dbReference type="InterPro" id="IPR014721">
    <property type="entry name" value="Ribsml_uS5_D2-typ_fold_subgr"/>
</dbReference>
<dbReference type="InterPro" id="IPR005225">
    <property type="entry name" value="Small_GTP-bd"/>
</dbReference>
<dbReference type="InterPro" id="IPR000795">
    <property type="entry name" value="T_Tr_GTP-bd_dom"/>
</dbReference>
<dbReference type="InterPro" id="IPR009000">
    <property type="entry name" value="Transl_B-barrel_sf"/>
</dbReference>
<dbReference type="InterPro" id="IPR004540">
    <property type="entry name" value="Transl_elong_EFG/EF2"/>
</dbReference>
<dbReference type="InterPro" id="IPR005517">
    <property type="entry name" value="Transl_elong_EFG/EF2_IV"/>
</dbReference>
<dbReference type="NCBIfam" id="TIGR00484">
    <property type="entry name" value="EF-G"/>
    <property type="match status" value="1"/>
</dbReference>
<dbReference type="NCBIfam" id="NF009379">
    <property type="entry name" value="PRK12740.1-3"/>
    <property type="match status" value="1"/>
</dbReference>
<dbReference type="NCBIfam" id="NF009381">
    <property type="entry name" value="PRK12740.1-5"/>
    <property type="match status" value="1"/>
</dbReference>
<dbReference type="NCBIfam" id="NF009891">
    <property type="entry name" value="PRK13351.1-1"/>
    <property type="match status" value="1"/>
</dbReference>
<dbReference type="NCBIfam" id="TIGR00231">
    <property type="entry name" value="small_GTP"/>
    <property type="match status" value="1"/>
</dbReference>
<dbReference type="PANTHER" id="PTHR43261:SF1">
    <property type="entry name" value="RIBOSOME-RELEASING FACTOR 2, MITOCHONDRIAL"/>
    <property type="match status" value="1"/>
</dbReference>
<dbReference type="PANTHER" id="PTHR43261">
    <property type="entry name" value="TRANSLATION ELONGATION FACTOR G-RELATED"/>
    <property type="match status" value="1"/>
</dbReference>
<dbReference type="Pfam" id="PF00679">
    <property type="entry name" value="EFG_C"/>
    <property type="match status" value="1"/>
</dbReference>
<dbReference type="Pfam" id="PF14492">
    <property type="entry name" value="EFG_III"/>
    <property type="match status" value="1"/>
</dbReference>
<dbReference type="Pfam" id="PF03764">
    <property type="entry name" value="EFG_IV"/>
    <property type="match status" value="1"/>
</dbReference>
<dbReference type="Pfam" id="PF00009">
    <property type="entry name" value="GTP_EFTU"/>
    <property type="match status" value="1"/>
</dbReference>
<dbReference type="Pfam" id="PF03144">
    <property type="entry name" value="GTP_EFTU_D2"/>
    <property type="match status" value="1"/>
</dbReference>
<dbReference type="PRINTS" id="PR00315">
    <property type="entry name" value="ELONGATNFCT"/>
</dbReference>
<dbReference type="SMART" id="SM00838">
    <property type="entry name" value="EFG_C"/>
    <property type="match status" value="1"/>
</dbReference>
<dbReference type="SMART" id="SM00889">
    <property type="entry name" value="EFG_IV"/>
    <property type="match status" value="1"/>
</dbReference>
<dbReference type="SUPFAM" id="SSF54980">
    <property type="entry name" value="EF-G C-terminal domain-like"/>
    <property type="match status" value="2"/>
</dbReference>
<dbReference type="SUPFAM" id="SSF52540">
    <property type="entry name" value="P-loop containing nucleoside triphosphate hydrolases"/>
    <property type="match status" value="1"/>
</dbReference>
<dbReference type="SUPFAM" id="SSF54211">
    <property type="entry name" value="Ribosomal protein S5 domain 2-like"/>
    <property type="match status" value="1"/>
</dbReference>
<dbReference type="SUPFAM" id="SSF50447">
    <property type="entry name" value="Translation proteins"/>
    <property type="match status" value="1"/>
</dbReference>
<dbReference type="PROSITE" id="PS00301">
    <property type="entry name" value="G_TR_1"/>
    <property type="match status" value="1"/>
</dbReference>
<dbReference type="PROSITE" id="PS51722">
    <property type="entry name" value="G_TR_2"/>
    <property type="match status" value="1"/>
</dbReference>
<evidence type="ECO:0000255" key="1">
    <source>
        <dbReference type="HAMAP-Rule" id="MF_00054"/>
    </source>
</evidence>
<keyword id="KW-0963">Cytoplasm</keyword>
<keyword id="KW-0251">Elongation factor</keyword>
<keyword id="KW-0342">GTP-binding</keyword>
<keyword id="KW-0547">Nucleotide-binding</keyword>
<keyword id="KW-0648">Protein biosynthesis</keyword>
<protein>
    <recommendedName>
        <fullName evidence="1">Elongation factor G</fullName>
        <shortName evidence="1">EF-G</shortName>
    </recommendedName>
</protein>
<sequence>MAREFSLENTRNIGIMAHIDAGKTTATERILYYTGRIHKIGETHEGASQMDWMEQEQERGITITSAATTAQWKGHRVNIIDTPGHVDFTVEVERSLRVLDGAVAVLDAQSGVEPQTETVWRQATTYGVPRIVFVNKMDKIGADFLYSVGTIHDRLQANAHPIQLPIGAEDEFNGIIDLVEECAYMYGNDLGTDIQRVEIPEEHKELAEEYRGKLIEAVAELDEEMMMKYLEGEEITVEELKAGIRKATTSVEFFPVICGSAFKNKGVQILLDAVIDYLPSPLDVPAIKGIVPDTDEEVERKSSDEEPFAALAFKIMTDPYVGKLTFFRVYSGVLNSGSYVKNSTKGKRERVGRILQMHANSREEISTVYAGDIAAAVGLKDTTTGDTLCDEKSLVILESMEFPEPVISVAIEPKSKADQDKMGTALSKLSEEDPTFRAHTDQETGQTIIAGMGELHLDIIVDRMRREFKVEANVGAPQVAYRETFRAAAKVEGKFARQSGGRGQFGHVWIEFEPNEEGKGFEFENKIVGGVVPREYIPAVGAGLEDALKNGVLAGYPVVDIKAALVDGSYHDVDSSEMAFKIAASMALKAAVSKCNPVILEPMMKVEVVIPEEYMGDIMGDVTSRRGRVEGMEARGNAQVVRAMVPLSEMFGYATSLRSNTQGRGTFSXVFDHYEEVPKSVSEEIIKKNKGE</sequence>
<name>EFG_BACC0</name>
<reference key="1">
    <citation type="submission" date="2008-10" db="EMBL/GenBank/DDBJ databases">
        <title>Genome sequence of Bacillus cereus AH820.</title>
        <authorList>
            <person name="Dodson R.J."/>
            <person name="Durkin A.S."/>
            <person name="Rosovitz M.J."/>
            <person name="Rasko D.A."/>
            <person name="Hoffmaster A."/>
            <person name="Ravel J."/>
            <person name="Sutton G."/>
        </authorList>
    </citation>
    <scope>NUCLEOTIDE SEQUENCE [LARGE SCALE GENOMIC DNA]</scope>
    <source>
        <strain>AH820</strain>
    </source>
</reference>
<accession>B7JKB6</accession>
<feature type="chain" id="PRO_1000201436" description="Elongation factor G">
    <location>
        <begin position="1"/>
        <end position="692"/>
    </location>
</feature>
<feature type="domain" description="tr-type G">
    <location>
        <begin position="8"/>
        <end position="282"/>
    </location>
</feature>
<feature type="binding site" evidence="1">
    <location>
        <begin position="17"/>
        <end position="24"/>
    </location>
    <ligand>
        <name>GTP</name>
        <dbReference type="ChEBI" id="CHEBI:37565"/>
    </ligand>
</feature>
<feature type="binding site" evidence="1">
    <location>
        <begin position="81"/>
        <end position="85"/>
    </location>
    <ligand>
        <name>GTP</name>
        <dbReference type="ChEBI" id="CHEBI:37565"/>
    </ligand>
</feature>
<feature type="binding site" evidence="1">
    <location>
        <begin position="135"/>
        <end position="138"/>
    </location>
    <ligand>
        <name>GTP</name>
        <dbReference type="ChEBI" id="CHEBI:37565"/>
    </ligand>
</feature>
<gene>
    <name evidence="1" type="primary">fusA</name>
    <name type="ordered locus">BCAH820_0119</name>
</gene>
<organism>
    <name type="scientific">Bacillus cereus (strain AH820)</name>
    <dbReference type="NCBI Taxonomy" id="405535"/>
    <lineage>
        <taxon>Bacteria</taxon>
        <taxon>Bacillati</taxon>
        <taxon>Bacillota</taxon>
        <taxon>Bacilli</taxon>
        <taxon>Bacillales</taxon>
        <taxon>Bacillaceae</taxon>
        <taxon>Bacillus</taxon>
        <taxon>Bacillus cereus group</taxon>
    </lineage>
</organism>
<comment type="function">
    <text evidence="1">Catalyzes the GTP-dependent ribosomal translocation step during translation elongation. During this step, the ribosome changes from the pre-translocational (PRE) to the post-translocational (POST) state as the newly formed A-site-bound peptidyl-tRNA and P-site-bound deacylated tRNA move to the P and E sites, respectively. Catalyzes the coordinated movement of the two tRNA molecules, the mRNA and conformational changes in the ribosome.</text>
</comment>
<comment type="subcellular location">
    <subcellularLocation>
        <location evidence="1">Cytoplasm</location>
    </subcellularLocation>
</comment>
<comment type="similarity">
    <text evidence="1">Belongs to the TRAFAC class translation factor GTPase superfamily. Classic translation factor GTPase family. EF-G/EF-2 subfamily.</text>
</comment>